<reference key="1">
    <citation type="journal article" date="2006" name="Proc. Natl. Acad. Sci. U.S.A.">
        <title>Molecular genetic anatomy of inter- and intraserotype variation in the human bacterial pathogen group A Streptococcus.</title>
        <authorList>
            <person name="Beres S.B."/>
            <person name="Richter E.W."/>
            <person name="Nagiec M.J."/>
            <person name="Sumby P."/>
            <person name="Porcella S.F."/>
            <person name="DeLeo F.R."/>
            <person name="Musser J.M."/>
        </authorList>
    </citation>
    <scope>NUCLEOTIDE SEQUENCE [LARGE SCALE GENOMIC DNA]</scope>
    <source>
        <strain>MGAS10750</strain>
    </source>
</reference>
<feature type="chain" id="PRO_0000250338" description="Glycerol-3-phosphate acyltransferase">
    <location>
        <begin position="1"/>
        <end position="213"/>
    </location>
</feature>
<feature type="transmembrane region" description="Helical" evidence="1">
    <location>
        <begin position="3"/>
        <end position="23"/>
    </location>
</feature>
<feature type="transmembrane region" description="Helical" evidence="1">
    <location>
        <begin position="68"/>
        <end position="88"/>
    </location>
</feature>
<feature type="transmembrane region" description="Helical" evidence="1">
    <location>
        <begin position="112"/>
        <end position="132"/>
    </location>
</feature>
<feature type="transmembrane region" description="Helical" evidence="1">
    <location>
        <begin position="134"/>
        <end position="154"/>
    </location>
</feature>
<feature type="transmembrane region" description="Helical" evidence="1">
    <location>
        <begin position="163"/>
        <end position="183"/>
    </location>
</feature>
<comment type="function">
    <text evidence="1">Catalyzes the transfer of an acyl group from acyl-phosphate (acyl-PO(4)) to glycerol-3-phosphate (G3P) to form lysophosphatidic acid (LPA). This enzyme utilizes acyl-phosphate as fatty acyl donor, but not acyl-CoA or acyl-ACP.</text>
</comment>
<comment type="catalytic activity">
    <reaction evidence="1">
        <text>an acyl phosphate + sn-glycerol 3-phosphate = a 1-acyl-sn-glycero-3-phosphate + phosphate</text>
        <dbReference type="Rhea" id="RHEA:34075"/>
        <dbReference type="ChEBI" id="CHEBI:43474"/>
        <dbReference type="ChEBI" id="CHEBI:57597"/>
        <dbReference type="ChEBI" id="CHEBI:57970"/>
        <dbReference type="ChEBI" id="CHEBI:59918"/>
        <dbReference type="EC" id="2.3.1.275"/>
    </reaction>
</comment>
<comment type="pathway">
    <text evidence="1">Lipid metabolism; phospholipid metabolism.</text>
</comment>
<comment type="subunit">
    <text evidence="1">Probably interacts with PlsX.</text>
</comment>
<comment type="subcellular location">
    <subcellularLocation>
        <location evidence="1">Cell membrane</location>
        <topology evidence="1">Multi-pass membrane protein</topology>
    </subcellularLocation>
</comment>
<comment type="similarity">
    <text evidence="1">Belongs to the PlsY family.</text>
</comment>
<comment type="sequence caution" evidence="2">
    <conflict type="erroneous initiation">
        <sequence resource="EMBL-CDS" id="ABF37752"/>
    </conflict>
</comment>
<organism>
    <name type="scientific">Streptococcus pyogenes serotype M4 (strain MGAS10750)</name>
    <dbReference type="NCBI Taxonomy" id="370554"/>
    <lineage>
        <taxon>Bacteria</taxon>
        <taxon>Bacillati</taxon>
        <taxon>Bacillota</taxon>
        <taxon>Bacilli</taxon>
        <taxon>Lactobacillales</taxon>
        <taxon>Streptococcaceae</taxon>
        <taxon>Streptococcus</taxon>
    </lineage>
</organism>
<protein>
    <recommendedName>
        <fullName evidence="1">Glycerol-3-phosphate acyltransferase</fullName>
    </recommendedName>
    <alternativeName>
        <fullName evidence="1">Acyl-PO4 G3P acyltransferase</fullName>
    </alternativeName>
    <alternativeName>
        <fullName evidence="1">Acyl-phosphate--glycerol-3-phosphate acyltransferase</fullName>
    </alternativeName>
    <alternativeName>
        <fullName evidence="1">G3P acyltransferase</fullName>
        <shortName evidence="1">GPAT</shortName>
        <ecNumber evidence="1">2.3.1.275</ecNumber>
    </alternativeName>
    <alternativeName>
        <fullName evidence="1">Lysophosphatidic acid synthase</fullName>
        <shortName evidence="1">LPA synthase</shortName>
    </alternativeName>
</protein>
<keyword id="KW-1003">Cell membrane</keyword>
<keyword id="KW-0444">Lipid biosynthesis</keyword>
<keyword id="KW-0443">Lipid metabolism</keyword>
<keyword id="KW-0472">Membrane</keyword>
<keyword id="KW-0594">Phospholipid biosynthesis</keyword>
<keyword id="KW-1208">Phospholipid metabolism</keyword>
<keyword id="KW-0808">Transferase</keyword>
<keyword id="KW-0812">Transmembrane</keyword>
<keyword id="KW-1133">Transmembrane helix</keyword>
<sequence>MKLLLFITIAYLLGSIPTGLWIGQYFYHINLREHGSGNTGTTNTFRILGVKAGTATLAIDMFKGTLSILLPIIFGMTSISSIAIGFFAVLGHTFPIFANFKGGKAVATSAGVLLGFAPLYLFFLASIFVLVLYLFSMISLASVVSAIVGVLSVLTFPAIHFLLPNYDYFLTFIVILLAFIIIIRHKDNISRIKHHTENLIPWGLNLSKQVPKK</sequence>
<evidence type="ECO:0000255" key="1">
    <source>
        <dbReference type="HAMAP-Rule" id="MF_01043"/>
    </source>
</evidence>
<evidence type="ECO:0000305" key="2"/>
<dbReference type="EC" id="2.3.1.275" evidence="1"/>
<dbReference type="EMBL" id="CP000262">
    <property type="protein sequence ID" value="ABF37752.1"/>
    <property type="status" value="ALT_INIT"/>
    <property type="molecule type" value="Genomic_DNA"/>
</dbReference>
<dbReference type="SMR" id="Q1J722"/>
<dbReference type="KEGG" id="spi:MGAS10750_Spy0802"/>
<dbReference type="HOGENOM" id="CLU_081254_4_0_9"/>
<dbReference type="UniPathway" id="UPA00085"/>
<dbReference type="Proteomes" id="UP000002434">
    <property type="component" value="Chromosome"/>
</dbReference>
<dbReference type="GO" id="GO:0005886">
    <property type="term" value="C:plasma membrane"/>
    <property type="evidence" value="ECO:0007669"/>
    <property type="project" value="UniProtKB-SubCell"/>
</dbReference>
<dbReference type="GO" id="GO:0043772">
    <property type="term" value="F:acyl-phosphate glycerol-3-phosphate acyltransferase activity"/>
    <property type="evidence" value="ECO:0007669"/>
    <property type="project" value="UniProtKB-UniRule"/>
</dbReference>
<dbReference type="GO" id="GO:0008654">
    <property type="term" value="P:phospholipid biosynthetic process"/>
    <property type="evidence" value="ECO:0007669"/>
    <property type="project" value="UniProtKB-UniRule"/>
</dbReference>
<dbReference type="HAMAP" id="MF_01043">
    <property type="entry name" value="PlsY"/>
    <property type="match status" value="1"/>
</dbReference>
<dbReference type="InterPro" id="IPR003811">
    <property type="entry name" value="G3P_acylTferase_PlsY"/>
</dbReference>
<dbReference type="NCBIfam" id="TIGR00023">
    <property type="entry name" value="glycerol-3-phosphate 1-O-acyltransferase PlsY"/>
    <property type="match status" value="1"/>
</dbReference>
<dbReference type="PANTHER" id="PTHR30309:SF0">
    <property type="entry name" value="GLYCEROL-3-PHOSPHATE ACYLTRANSFERASE-RELATED"/>
    <property type="match status" value="1"/>
</dbReference>
<dbReference type="PANTHER" id="PTHR30309">
    <property type="entry name" value="INNER MEMBRANE PROTEIN YGIH"/>
    <property type="match status" value="1"/>
</dbReference>
<dbReference type="Pfam" id="PF02660">
    <property type="entry name" value="G3P_acyltransf"/>
    <property type="match status" value="1"/>
</dbReference>
<dbReference type="SMART" id="SM01207">
    <property type="entry name" value="G3P_acyltransf"/>
    <property type="match status" value="1"/>
</dbReference>
<accession>Q1J722</accession>
<gene>
    <name evidence="1" type="primary">plsY</name>
    <name type="ordered locus">MGAS10750_Spy0802</name>
</gene>
<name>PLSY_STRPF</name>
<proteinExistence type="inferred from homology"/>